<evidence type="ECO:0000255" key="1">
    <source>
        <dbReference type="HAMAP-Rule" id="MF_00484"/>
    </source>
</evidence>
<proteinExistence type="inferred from homology"/>
<feature type="chain" id="PRO_1000126051" description="Glycogen synthase">
    <location>
        <begin position="1"/>
        <end position="478"/>
    </location>
</feature>
<feature type="binding site" evidence="1">
    <location>
        <position position="15"/>
    </location>
    <ligand>
        <name>ADP-alpha-D-glucose</name>
        <dbReference type="ChEBI" id="CHEBI:57498"/>
    </ligand>
</feature>
<gene>
    <name evidence="1" type="primary">glgA</name>
    <name type="ordered locus">APP7_0354</name>
</gene>
<comment type="function">
    <text evidence="1">Synthesizes alpha-1,4-glucan chains using ADP-glucose.</text>
</comment>
<comment type="catalytic activity">
    <reaction evidence="1">
        <text>[(1-&gt;4)-alpha-D-glucosyl](n) + ADP-alpha-D-glucose = [(1-&gt;4)-alpha-D-glucosyl](n+1) + ADP + H(+)</text>
        <dbReference type="Rhea" id="RHEA:18189"/>
        <dbReference type="Rhea" id="RHEA-COMP:9584"/>
        <dbReference type="Rhea" id="RHEA-COMP:9587"/>
        <dbReference type="ChEBI" id="CHEBI:15378"/>
        <dbReference type="ChEBI" id="CHEBI:15444"/>
        <dbReference type="ChEBI" id="CHEBI:57498"/>
        <dbReference type="ChEBI" id="CHEBI:456216"/>
        <dbReference type="EC" id="2.4.1.21"/>
    </reaction>
</comment>
<comment type="pathway">
    <text evidence="1">Glycan biosynthesis; glycogen biosynthesis.</text>
</comment>
<comment type="similarity">
    <text evidence="1">Belongs to the glycosyltransferase 1 family. Bacterial/plant glycogen synthase subfamily.</text>
</comment>
<organism>
    <name type="scientific">Actinobacillus pleuropneumoniae serotype 7 (strain AP76)</name>
    <dbReference type="NCBI Taxonomy" id="537457"/>
    <lineage>
        <taxon>Bacteria</taxon>
        <taxon>Pseudomonadati</taxon>
        <taxon>Pseudomonadota</taxon>
        <taxon>Gammaproteobacteria</taxon>
        <taxon>Pasteurellales</taxon>
        <taxon>Pasteurellaceae</taxon>
        <taxon>Actinobacillus</taxon>
    </lineage>
</organism>
<name>GLGA_ACTP7</name>
<dbReference type="EC" id="2.4.1.21" evidence="1"/>
<dbReference type="EMBL" id="CP001091">
    <property type="protein sequence ID" value="ACE61006.1"/>
    <property type="molecule type" value="Genomic_DNA"/>
</dbReference>
<dbReference type="RefSeq" id="WP_005596321.1">
    <property type="nucleotide sequence ID" value="NC_010939.1"/>
</dbReference>
<dbReference type="SMR" id="B3H0J4"/>
<dbReference type="CAZy" id="GT5">
    <property type="family name" value="Glycosyltransferase Family 5"/>
</dbReference>
<dbReference type="GeneID" id="48598513"/>
<dbReference type="KEGG" id="apa:APP7_0354"/>
<dbReference type="HOGENOM" id="CLU_009583_18_4_6"/>
<dbReference type="UniPathway" id="UPA00164"/>
<dbReference type="Proteomes" id="UP000001226">
    <property type="component" value="Chromosome"/>
</dbReference>
<dbReference type="GO" id="GO:0005829">
    <property type="term" value="C:cytosol"/>
    <property type="evidence" value="ECO:0007669"/>
    <property type="project" value="TreeGrafter"/>
</dbReference>
<dbReference type="GO" id="GO:0009011">
    <property type="term" value="F:alpha-1,4-glucan glucosyltransferase (ADP-glucose donor) activity"/>
    <property type="evidence" value="ECO:0007669"/>
    <property type="project" value="UniProtKB-UniRule"/>
</dbReference>
<dbReference type="GO" id="GO:0004373">
    <property type="term" value="F:alpha-1,4-glucan glucosyltransferase (UDP-glucose donor) activity"/>
    <property type="evidence" value="ECO:0007669"/>
    <property type="project" value="InterPro"/>
</dbReference>
<dbReference type="GO" id="GO:0005978">
    <property type="term" value="P:glycogen biosynthetic process"/>
    <property type="evidence" value="ECO:0007669"/>
    <property type="project" value="UniProtKB-UniRule"/>
</dbReference>
<dbReference type="CDD" id="cd03791">
    <property type="entry name" value="GT5_Glycogen_synthase_DULL1-like"/>
    <property type="match status" value="1"/>
</dbReference>
<dbReference type="FunFam" id="3.40.50.2000:FF:000011">
    <property type="entry name" value="Glycogen synthase"/>
    <property type="match status" value="1"/>
</dbReference>
<dbReference type="Gene3D" id="3.40.50.2000">
    <property type="entry name" value="Glycogen Phosphorylase B"/>
    <property type="match status" value="2"/>
</dbReference>
<dbReference type="HAMAP" id="MF_00484">
    <property type="entry name" value="Glycogen_synth"/>
    <property type="match status" value="1"/>
</dbReference>
<dbReference type="InterPro" id="IPR001296">
    <property type="entry name" value="Glyco_trans_1"/>
</dbReference>
<dbReference type="InterPro" id="IPR011835">
    <property type="entry name" value="GS/SS"/>
</dbReference>
<dbReference type="InterPro" id="IPR013534">
    <property type="entry name" value="Starch_synth_cat_dom"/>
</dbReference>
<dbReference type="NCBIfam" id="TIGR02095">
    <property type="entry name" value="glgA"/>
    <property type="match status" value="1"/>
</dbReference>
<dbReference type="NCBIfam" id="NF001899">
    <property type="entry name" value="PRK00654.1-2"/>
    <property type="match status" value="1"/>
</dbReference>
<dbReference type="PANTHER" id="PTHR45825:SF11">
    <property type="entry name" value="ALPHA AMYLASE DOMAIN-CONTAINING PROTEIN"/>
    <property type="match status" value="1"/>
</dbReference>
<dbReference type="PANTHER" id="PTHR45825">
    <property type="entry name" value="GRANULE-BOUND STARCH SYNTHASE 1, CHLOROPLASTIC/AMYLOPLASTIC"/>
    <property type="match status" value="1"/>
</dbReference>
<dbReference type="Pfam" id="PF08323">
    <property type="entry name" value="Glyco_transf_5"/>
    <property type="match status" value="1"/>
</dbReference>
<dbReference type="Pfam" id="PF00534">
    <property type="entry name" value="Glycos_transf_1"/>
    <property type="match status" value="1"/>
</dbReference>
<dbReference type="SUPFAM" id="SSF53756">
    <property type="entry name" value="UDP-Glycosyltransferase/glycogen phosphorylase"/>
    <property type="match status" value="1"/>
</dbReference>
<protein>
    <recommendedName>
        <fullName evidence="1">Glycogen synthase</fullName>
        <ecNumber evidence="1">2.4.1.21</ecNumber>
    </recommendedName>
    <alternativeName>
        <fullName evidence="1">Starch [bacterial glycogen] synthase</fullName>
    </alternativeName>
</protein>
<accession>B3H0J4</accession>
<reference key="1">
    <citation type="submission" date="2008-06" db="EMBL/GenBank/DDBJ databases">
        <title>Genome and proteome analysis of A. pleuropneumoniae serotype 7.</title>
        <authorList>
            <person name="Linke B."/>
            <person name="Buettner F."/>
            <person name="Martinez-Arias R."/>
            <person name="Goesmann A."/>
            <person name="Baltes N."/>
            <person name="Tegetmeyer H."/>
            <person name="Singh M."/>
            <person name="Gerlach G.F."/>
        </authorList>
    </citation>
    <scope>NUCLEOTIDE SEQUENCE [LARGE SCALE GENOMIC DNA]</scope>
    <source>
        <strain>AP76</strain>
    </source>
</reference>
<sequence length="478" mass="53563">MKILHICSEMYPLIKTGGLADVMGALPYAQQQSGNDVRVLIPLYPQVAEKIGETNEVATIGTFAGLVTIRFTYFNGLGVYVIDAPHLFQRSGNPYHDSGYADYPDNYKRFALLGYLGAQLSEGLDQWWGKADILHAHDWQGGLACAYLKSWNSPVKSVFTIHNIAYPGRFHSYHLHELGLPWHFFQAEGLEFYGEISYLKAGLYFADKITTVSPTYALEITEEIAGGGMHGLLQTRKAQGRLHGVLNGVDDTVWNPETDTNIVATYKPSYMQGKSKNKAELQQMFHLPEDKDAMLMVMVTRLTEQKGADFILDRIDELMEERVQLVVLGSGSPHLEYLLNEARSRHPEQIGIYIGYNEALSHQIIAGGDVILVPSRFEPCGLTQLYGLKYGTLPLVRRTGGLADTVVDSNKESIEQRTATGFVFNYPSSDDFLEAFRRAVNLWKKNKLWSSVRQNALAQDFGWARAAASYQAIYQEIV</sequence>
<keyword id="KW-0320">Glycogen biosynthesis</keyword>
<keyword id="KW-0328">Glycosyltransferase</keyword>
<keyword id="KW-0808">Transferase</keyword>